<protein>
    <recommendedName>
        <fullName>Oxysterol-binding protein-like protein OBPa</fullName>
    </recommendedName>
</protein>
<proteinExistence type="inferred from homology"/>
<keyword id="KW-0445">Lipid transport</keyword>
<keyword id="KW-0446">Lipid-binding</keyword>
<keyword id="KW-1185">Reference proteome</keyword>
<keyword id="KW-0813">Transport</keyword>
<feature type="chain" id="PRO_0000100383" description="Oxysterol-binding protein-like protein OBPa">
    <location>
        <begin position="1"/>
        <end position="433"/>
    </location>
</feature>
<sequence>MGLTSKLEKLKLKELTGHEAAVKSNVVNGADTDDTDDIDEMDNEGQSILMGIIAQLRPGMDLSRITLPTFILEKKSMLERITNFFQIPDMLLKANRTSDDVERFVSVLAWYLASWHIAPKAVKKPLNPVLGETFNCYWENISDDCSAYYISEQVSHHPPKSSYFYLVPEAKIKVDGILIPKSRFLGNSSAAMMEGWAHLTLGEHENEVYEMNQPNVYCRGILFGKMKMELGDHMYVKCRKTGLEADIDFKTKGFISGTYDAIEGVIKNSKTSEVLYQITGKWNEVMEIKDLKTGKKRVLVDTKSSVPVKPRVRPLEEQGQYESRKLWKPTIDALARRDHTVATEEKFAVEDEQRNLAKKRIDDGVEFHPKFFRPVNEKEVELQDLEYVIYKKFDLKSNPEVLTDEVLSIAPILPGQKHDEKFEIPAFKKHEET</sequence>
<accession>Q9UW25</accession>
<accession>A0A1D8PN99</accession>
<accession>Q59YI2</accession>
<evidence type="ECO:0000305" key="1"/>
<dbReference type="EMBL" id="AF167162">
    <property type="protein sequence ID" value="AAD51406.1"/>
    <property type="molecule type" value="Genomic_DNA"/>
</dbReference>
<dbReference type="EMBL" id="CP017627">
    <property type="protein sequence ID" value="AOW29608.1"/>
    <property type="molecule type" value="Genomic_DNA"/>
</dbReference>
<dbReference type="RefSeq" id="XP_714614.1">
    <property type="nucleotide sequence ID" value="XM_709521.1"/>
</dbReference>
<dbReference type="SMR" id="Q9UW25"/>
<dbReference type="FunCoup" id="Q9UW25">
    <property type="interactions" value="1351"/>
</dbReference>
<dbReference type="STRING" id="237561.Q9UW25"/>
<dbReference type="EnsemblFungi" id="C5_01770C_A-T">
    <property type="protein sequence ID" value="C5_01770C_A-T-p1"/>
    <property type="gene ID" value="C5_01770C_A"/>
</dbReference>
<dbReference type="GeneID" id="3643764"/>
<dbReference type="KEGG" id="cal:CAALFM_C501770CA"/>
<dbReference type="CGD" id="CAL0000179350">
    <property type="gene designation" value="OBPA"/>
</dbReference>
<dbReference type="VEuPathDB" id="FungiDB:C5_01770C_A"/>
<dbReference type="HOGENOM" id="CLU_012334_4_2_1"/>
<dbReference type="InParanoid" id="Q9UW25"/>
<dbReference type="OMA" id="RYDYPNG"/>
<dbReference type="OrthoDB" id="14833at2759"/>
<dbReference type="Proteomes" id="UP000000559">
    <property type="component" value="Chromosome 5"/>
</dbReference>
<dbReference type="GO" id="GO:0032541">
    <property type="term" value="C:cortical endoplasmic reticulum"/>
    <property type="evidence" value="ECO:0000318"/>
    <property type="project" value="GO_Central"/>
</dbReference>
<dbReference type="GO" id="GO:0005829">
    <property type="term" value="C:cytosol"/>
    <property type="evidence" value="ECO:0000318"/>
    <property type="project" value="GO_Central"/>
</dbReference>
<dbReference type="GO" id="GO:0016020">
    <property type="term" value="C:membrane"/>
    <property type="evidence" value="ECO:0000318"/>
    <property type="project" value="GO_Central"/>
</dbReference>
<dbReference type="GO" id="GO:0032934">
    <property type="term" value="F:sterol binding"/>
    <property type="evidence" value="ECO:0000318"/>
    <property type="project" value="GO_Central"/>
</dbReference>
<dbReference type="GO" id="GO:0006897">
    <property type="term" value="P:endocytosis"/>
    <property type="evidence" value="ECO:0000318"/>
    <property type="project" value="GO_Central"/>
</dbReference>
<dbReference type="GO" id="GO:0006887">
    <property type="term" value="P:exocytosis"/>
    <property type="evidence" value="ECO:0000318"/>
    <property type="project" value="GO_Central"/>
</dbReference>
<dbReference type="GO" id="GO:0006869">
    <property type="term" value="P:lipid transport"/>
    <property type="evidence" value="ECO:0007669"/>
    <property type="project" value="UniProtKB-KW"/>
</dbReference>
<dbReference type="GO" id="GO:0030011">
    <property type="term" value="P:maintenance of cell polarity"/>
    <property type="evidence" value="ECO:0000318"/>
    <property type="project" value="GO_Central"/>
</dbReference>
<dbReference type="GO" id="GO:0034727">
    <property type="term" value="P:piecemeal microautophagy of the nucleus"/>
    <property type="evidence" value="ECO:0000318"/>
    <property type="project" value="GO_Central"/>
</dbReference>
<dbReference type="GO" id="GO:0044011">
    <property type="term" value="P:single-species biofilm formation on inanimate substrate"/>
    <property type="evidence" value="ECO:0000315"/>
    <property type="project" value="CGD"/>
</dbReference>
<dbReference type="FunFam" id="3.30.70.3490:FF:000014">
    <property type="entry name" value="OSH7p Oxysterol-binding protein"/>
    <property type="match status" value="1"/>
</dbReference>
<dbReference type="FunFam" id="2.40.160.120:FF:000007">
    <property type="entry name" value="Oxysterol binding protein"/>
    <property type="match status" value="1"/>
</dbReference>
<dbReference type="FunFam" id="1.10.287.2720:FF:000001">
    <property type="entry name" value="Oxysterol-binding OBPalpha"/>
    <property type="match status" value="1"/>
</dbReference>
<dbReference type="Gene3D" id="1.10.287.2720">
    <property type="match status" value="1"/>
</dbReference>
<dbReference type="Gene3D" id="2.40.160.120">
    <property type="match status" value="1"/>
</dbReference>
<dbReference type="Gene3D" id="3.30.70.3490">
    <property type="match status" value="1"/>
</dbReference>
<dbReference type="InterPro" id="IPR037239">
    <property type="entry name" value="OSBP_sf"/>
</dbReference>
<dbReference type="InterPro" id="IPR000648">
    <property type="entry name" value="Oxysterol-bd"/>
</dbReference>
<dbReference type="InterPro" id="IPR018494">
    <property type="entry name" value="Oxysterol-bd_CS"/>
</dbReference>
<dbReference type="PANTHER" id="PTHR10972:SF102">
    <property type="entry name" value="OXYSTEROL-BINDING PROTEIN"/>
    <property type="match status" value="1"/>
</dbReference>
<dbReference type="PANTHER" id="PTHR10972">
    <property type="entry name" value="OXYSTEROL-BINDING PROTEIN-RELATED"/>
    <property type="match status" value="1"/>
</dbReference>
<dbReference type="Pfam" id="PF01237">
    <property type="entry name" value="Oxysterol_BP"/>
    <property type="match status" value="1"/>
</dbReference>
<dbReference type="SUPFAM" id="SSF144000">
    <property type="entry name" value="Oxysterol-binding protein-like"/>
    <property type="match status" value="1"/>
</dbReference>
<dbReference type="PROSITE" id="PS01013">
    <property type="entry name" value="OSBP"/>
    <property type="match status" value="1"/>
</dbReference>
<comment type="miscellaneous">
    <text>The C.albicans mating-type-like (MTL) locus contains, in addition to the genes for the regulatory proteins (MTLA1, MTLA2, MTLALPHA1 and MTLALPHA2), a and alpha idiomorphs of a phosphatidylinositol kinase (PIKA and PIKALPHA), a poly(A) polymerase (PAPA and PAPALPHA) and an oxysterol binding protein-like protein (OBPA and OBPALPHA).</text>
</comment>
<comment type="similarity">
    <text evidence="1">Belongs to the OSBP family.</text>
</comment>
<gene>
    <name type="primary">OBPA</name>
    <name type="ordered locus">CAALFM_C501770CA</name>
    <name type="ORF">CaO19.3198</name>
</gene>
<name>OBPA_CANAL</name>
<organism>
    <name type="scientific">Candida albicans (strain SC5314 / ATCC MYA-2876)</name>
    <name type="common">Yeast</name>
    <dbReference type="NCBI Taxonomy" id="237561"/>
    <lineage>
        <taxon>Eukaryota</taxon>
        <taxon>Fungi</taxon>
        <taxon>Dikarya</taxon>
        <taxon>Ascomycota</taxon>
        <taxon>Saccharomycotina</taxon>
        <taxon>Pichiomycetes</taxon>
        <taxon>Debaryomycetaceae</taxon>
        <taxon>Candida/Lodderomyces clade</taxon>
        <taxon>Candida</taxon>
    </lineage>
</organism>
<reference key="1">
    <citation type="journal article" date="1999" name="Science">
        <title>Identification of a mating type-like locus in the asexual pathogenic yeast Candida albicans.</title>
        <authorList>
            <person name="Hull C.M."/>
            <person name="Johnson A.D."/>
        </authorList>
    </citation>
    <scope>NUCLEOTIDE SEQUENCE [GENOMIC DNA]</scope>
    <source>
        <strain>SC5314 / ATCC MYA-2876</strain>
    </source>
</reference>
<reference key="2">
    <citation type="journal article" date="2004" name="Proc. Natl. Acad. Sci. U.S.A.">
        <title>The diploid genome sequence of Candida albicans.</title>
        <authorList>
            <person name="Jones T."/>
            <person name="Federspiel N.A."/>
            <person name="Chibana H."/>
            <person name="Dungan J."/>
            <person name="Kalman S."/>
            <person name="Magee B.B."/>
            <person name="Newport G."/>
            <person name="Thorstenson Y.R."/>
            <person name="Agabian N."/>
            <person name="Magee P.T."/>
            <person name="Davis R.W."/>
            <person name="Scherer S."/>
        </authorList>
    </citation>
    <scope>NUCLEOTIDE SEQUENCE [LARGE SCALE GENOMIC DNA]</scope>
    <source>
        <strain>SC5314 / ATCC MYA-2876</strain>
    </source>
</reference>
<reference key="3">
    <citation type="journal article" date="2007" name="Genome Biol.">
        <title>Assembly of the Candida albicans genome into sixteen supercontigs aligned on the eight chromosomes.</title>
        <authorList>
            <person name="van het Hoog M."/>
            <person name="Rast T.J."/>
            <person name="Martchenko M."/>
            <person name="Grindle S."/>
            <person name="Dignard D."/>
            <person name="Hogues H."/>
            <person name="Cuomo C."/>
            <person name="Berriman M."/>
            <person name="Scherer S."/>
            <person name="Magee B.B."/>
            <person name="Whiteway M."/>
            <person name="Chibana H."/>
            <person name="Nantel A."/>
            <person name="Magee P.T."/>
        </authorList>
    </citation>
    <scope>GENOME REANNOTATION</scope>
    <source>
        <strain>SC5314 / ATCC MYA-2876</strain>
    </source>
</reference>
<reference key="4">
    <citation type="journal article" date="2013" name="Genome Biol.">
        <title>Assembly of a phased diploid Candida albicans genome facilitates allele-specific measurements and provides a simple model for repeat and indel structure.</title>
        <authorList>
            <person name="Muzzey D."/>
            <person name="Schwartz K."/>
            <person name="Weissman J.S."/>
            <person name="Sherlock G."/>
        </authorList>
    </citation>
    <scope>NUCLEOTIDE SEQUENCE [LARGE SCALE GENOMIC DNA]</scope>
    <scope>GENOME REANNOTATION</scope>
    <source>
        <strain>SC5314 / ATCC MYA-2876</strain>
    </source>
</reference>